<protein>
    <recommendedName>
        <fullName evidence="1">ATP-dependent Clp protease ATP-binding subunit ClpX</fullName>
    </recommendedName>
</protein>
<name>CLPX_STRP7</name>
<reference key="1">
    <citation type="journal article" date="2010" name="Genome Biol.">
        <title>Structure and dynamics of the pan-genome of Streptococcus pneumoniae and closely related species.</title>
        <authorList>
            <person name="Donati C."/>
            <person name="Hiller N.L."/>
            <person name="Tettelin H."/>
            <person name="Muzzi A."/>
            <person name="Croucher N.J."/>
            <person name="Angiuoli S.V."/>
            <person name="Oggioni M."/>
            <person name="Dunning Hotopp J.C."/>
            <person name="Hu F.Z."/>
            <person name="Riley D.R."/>
            <person name="Covacci A."/>
            <person name="Mitchell T.J."/>
            <person name="Bentley S.D."/>
            <person name="Kilian M."/>
            <person name="Ehrlich G.D."/>
            <person name="Rappuoli R."/>
            <person name="Moxon E.R."/>
            <person name="Masignani V."/>
        </authorList>
    </citation>
    <scope>NUCLEOTIDE SEQUENCE [LARGE SCALE GENOMIC DNA]</scope>
    <source>
        <strain>70585</strain>
    </source>
</reference>
<evidence type="ECO:0000255" key="1">
    <source>
        <dbReference type="HAMAP-Rule" id="MF_00175"/>
    </source>
</evidence>
<evidence type="ECO:0000255" key="2">
    <source>
        <dbReference type="PROSITE-ProRule" id="PRU01250"/>
    </source>
</evidence>
<sequence>MSTNRKNDMMVYCSFCGKNQEEVQKIIAGNNAFICNECVELAQEIIREELVEEVLADLSEVPKPIELLHILNHYVIGQDRAKRALAVAVYNHYKRINFHDTREESEDVDLQKSNILMIGPTGSGKTFLAQTLAKSLNVPFAIADATALTEAGYVGEDVENILLKLLQVADFNIERAERGIIYVDEIDKIAKKSENVSITRDVSGEGVQQALLKIIEGTVASVPPQGGRKHPQQEMIQVDTKNILFIVGGAFDGIEEIVKQRLGEKVIGFGQNNKAIDENSSYMQEIIAEDIQKFGIIPELIGRLPVFAALEQLTVDDLVRILKEPRNALVKQYQTLLSYDDVELEFDDEALQEIANKAIERKTGARGLRSIIEETMLDVMFEVPSQENVKLVRITKETVDGTDKPILETA</sequence>
<gene>
    <name evidence="1" type="primary">clpX</name>
    <name type="ordered locus">SP70585_1610</name>
</gene>
<organism>
    <name type="scientific">Streptococcus pneumoniae (strain 70585)</name>
    <dbReference type="NCBI Taxonomy" id="488221"/>
    <lineage>
        <taxon>Bacteria</taxon>
        <taxon>Bacillati</taxon>
        <taxon>Bacillota</taxon>
        <taxon>Bacilli</taxon>
        <taxon>Lactobacillales</taxon>
        <taxon>Streptococcaceae</taxon>
        <taxon>Streptococcus</taxon>
    </lineage>
</organism>
<dbReference type="EMBL" id="CP000918">
    <property type="protein sequence ID" value="ACO17877.1"/>
    <property type="molecule type" value="Genomic_DNA"/>
</dbReference>
<dbReference type="RefSeq" id="WP_000106346.1">
    <property type="nucleotide sequence ID" value="NC_012468.1"/>
</dbReference>
<dbReference type="SMR" id="C1C8G0"/>
<dbReference type="GeneID" id="45653193"/>
<dbReference type="KEGG" id="snm:SP70585_1610"/>
<dbReference type="HOGENOM" id="CLU_014218_8_2_9"/>
<dbReference type="Proteomes" id="UP000002211">
    <property type="component" value="Chromosome"/>
</dbReference>
<dbReference type="GO" id="GO:0009376">
    <property type="term" value="C:HslUV protease complex"/>
    <property type="evidence" value="ECO:0007669"/>
    <property type="project" value="TreeGrafter"/>
</dbReference>
<dbReference type="GO" id="GO:0005524">
    <property type="term" value="F:ATP binding"/>
    <property type="evidence" value="ECO:0007669"/>
    <property type="project" value="UniProtKB-UniRule"/>
</dbReference>
<dbReference type="GO" id="GO:0016887">
    <property type="term" value="F:ATP hydrolysis activity"/>
    <property type="evidence" value="ECO:0007669"/>
    <property type="project" value="InterPro"/>
</dbReference>
<dbReference type="GO" id="GO:0140662">
    <property type="term" value="F:ATP-dependent protein folding chaperone"/>
    <property type="evidence" value="ECO:0007669"/>
    <property type="project" value="InterPro"/>
</dbReference>
<dbReference type="GO" id="GO:0046983">
    <property type="term" value="F:protein dimerization activity"/>
    <property type="evidence" value="ECO:0007669"/>
    <property type="project" value="InterPro"/>
</dbReference>
<dbReference type="GO" id="GO:0051082">
    <property type="term" value="F:unfolded protein binding"/>
    <property type="evidence" value="ECO:0007669"/>
    <property type="project" value="UniProtKB-UniRule"/>
</dbReference>
<dbReference type="GO" id="GO:0008270">
    <property type="term" value="F:zinc ion binding"/>
    <property type="evidence" value="ECO:0007669"/>
    <property type="project" value="InterPro"/>
</dbReference>
<dbReference type="GO" id="GO:0051301">
    <property type="term" value="P:cell division"/>
    <property type="evidence" value="ECO:0007669"/>
    <property type="project" value="TreeGrafter"/>
</dbReference>
<dbReference type="GO" id="GO:0051603">
    <property type="term" value="P:proteolysis involved in protein catabolic process"/>
    <property type="evidence" value="ECO:0007669"/>
    <property type="project" value="TreeGrafter"/>
</dbReference>
<dbReference type="CDD" id="cd19497">
    <property type="entry name" value="RecA-like_ClpX"/>
    <property type="match status" value="1"/>
</dbReference>
<dbReference type="FunFam" id="1.10.8.60:FF:000002">
    <property type="entry name" value="ATP-dependent Clp protease ATP-binding subunit ClpX"/>
    <property type="match status" value="1"/>
</dbReference>
<dbReference type="FunFam" id="3.40.50.300:FF:000005">
    <property type="entry name" value="ATP-dependent Clp protease ATP-binding subunit ClpX"/>
    <property type="match status" value="1"/>
</dbReference>
<dbReference type="Gene3D" id="1.10.8.60">
    <property type="match status" value="1"/>
</dbReference>
<dbReference type="Gene3D" id="6.20.220.10">
    <property type="entry name" value="ClpX chaperone, C4-type zinc finger domain"/>
    <property type="match status" value="1"/>
</dbReference>
<dbReference type="Gene3D" id="3.40.50.300">
    <property type="entry name" value="P-loop containing nucleotide triphosphate hydrolases"/>
    <property type="match status" value="1"/>
</dbReference>
<dbReference type="HAMAP" id="MF_00175">
    <property type="entry name" value="ClpX"/>
    <property type="match status" value="1"/>
</dbReference>
<dbReference type="InterPro" id="IPR003593">
    <property type="entry name" value="AAA+_ATPase"/>
</dbReference>
<dbReference type="InterPro" id="IPR050052">
    <property type="entry name" value="ATP-dep_Clp_protease_ClpX"/>
</dbReference>
<dbReference type="InterPro" id="IPR003959">
    <property type="entry name" value="ATPase_AAA_core"/>
</dbReference>
<dbReference type="InterPro" id="IPR019489">
    <property type="entry name" value="Clp_ATPase_C"/>
</dbReference>
<dbReference type="InterPro" id="IPR004487">
    <property type="entry name" value="Clp_protease_ATP-bd_su_ClpX"/>
</dbReference>
<dbReference type="InterPro" id="IPR046425">
    <property type="entry name" value="ClpX_bact"/>
</dbReference>
<dbReference type="InterPro" id="IPR027417">
    <property type="entry name" value="P-loop_NTPase"/>
</dbReference>
<dbReference type="InterPro" id="IPR010603">
    <property type="entry name" value="Znf_CppX_C4"/>
</dbReference>
<dbReference type="InterPro" id="IPR038366">
    <property type="entry name" value="Znf_CppX_C4_sf"/>
</dbReference>
<dbReference type="NCBIfam" id="TIGR00382">
    <property type="entry name" value="clpX"/>
    <property type="match status" value="1"/>
</dbReference>
<dbReference type="NCBIfam" id="NF003745">
    <property type="entry name" value="PRK05342.1"/>
    <property type="match status" value="1"/>
</dbReference>
<dbReference type="PANTHER" id="PTHR48102:SF7">
    <property type="entry name" value="ATP-DEPENDENT CLP PROTEASE ATP-BINDING SUBUNIT CLPX-LIKE, MITOCHONDRIAL"/>
    <property type="match status" value="1"/>
</dbReference>
<dbReference type="PANTHER" id="PTHR48102">
    <property type="entry name" value="ATP-DEPENDENT CLP PROTEASE ATP-BINDING SUBUNIT CLPX-LIKE, MITOCHONDRIAL-RELATED"/>
    <property type="match status" value="1"/>
</dbReference>
<dbReference type="Pfam" id="PF07724">
    <property type="entry name" value="AAA_2"/>
    <property type="match status" value="1"/>
</dbReference>
<dbReference type="Pfam" id="PF10431">
    <property type="entry name" value="ClpB_D2-small"/>
    <property type="match status" value="1"/>
</dbReference>
<dbReference type="Pfam" id="PF06689">
    <property type="entry name" value="zf-C4_ClpX"/>
    <property type="match status" value="1"/>
</dbReference>
<dbReference type="SMART" id="SM00382">
    <property type="entry name" value="AAA"/>
    <property type="match status" value="1"/>
</dbReference>
<dbReference type="SMART" id="SM01086">
    <property type="entry name" value="ClpB_D2-small"/>
    <property type="match status" value="1"/>
</dbReference>
<dbReference type="SMART" id="SM00994">
    <property type="entry name" value="zf-C4_ClpX"/>
    <property type="match status" value="1"/>
</dbReference>
<dbReference type="SUPFAM" id="SSF57716">
    <property type="entry name" value="Glucocorticoid receptor-like (DNA-binding domain)"/>
    <property type="match status" value="1"/>
</dbReference>
<dbReference type="SUPFAM" id="SSF52540">
    <property type="entry name" value="P-loop containing nucleoside triphosphate hydrolases"/>
    <property type="match status" value="1"/>
</dbReference>
<dbReference type="PROSITE" id="PS51902">
    <property type="entry name" value="CLPX_ZB"/>
    <property type="match status" value="1"/>
</dbReference>
<keyword id="KW-0067">ATP-binding</keyword>
<keyword id="KW-0143">Chaperone</keyword>
<keyword id="KW-0479">Metal-binding</keyword>
<keyword id="KW-0547">Nucleotide-binding</keyword>
<keyword id="KW-0862">Zinc</keyword>
<comment type="function">
    <text evidence="1">ATP-dependent specificity component of the Clp protease. It directs the protease to specific substrates. Can perform chaperone functions in the absence of ClpP.</text>
</comment>
<comment type="subunit">
    <text evidence="1">Component of the ClpX-ClpP complex. Forms a hexameric ring that, in the presence of ATP, binds to fourteen ClpP subunits assembled into a disk-like structure with a central cavity, resembling the structure of eukaryotic proteasomes.</text>
</comment>
<comment type="similarity">
    <text evidence="1">Belongs to the ClpX chaperone family.</text>
</comment>
<accession>C1C8G0</accession>
<feature type="chain" id="PRO_1000123852" description="ATP-dependent Clp protease ATP-binding subunit ClpX">
    <location>
        <begin position="1"/>
        <end position="410"/>
    </location>
</feature>
<feature type="domain" description="ClpX-type ZB" evidence="2">
    <location>
        <begin position="1"/>
        <end position="54"/>
    </location>
</feature>
<feature type="binding site" evidence="2">
    <location>
        <position position="13"/>
    </location>
    <ligand>
        <name>Zn(2+)</name>
        <dbReference type="ChEBI" id="CHEBI:29105"/>
    </ligand>
</feature>
<feature type="binding site" evidence="2">
    <location>
        <position position="16"/>
    </location>
    <ligand>
        <name>Zn(2+)</name>
        <dbReference type="ChEBI" id="CHEBI:29105"/>
    </ligand>
</feature>
<feature type="binding site" evidence="2">
    <location>
        <position position="35"/>
    </location>
    <ligand>
        <name>Zn(2+)</name>
        <dbReference type="ChEBI" id="CHEBI:29105"/>
    </ligand>
</feature>
<feature type="binding site" evidence="2">
    <location>
        <position position="38"/>
    </location>
    <ligand>
        <name>Zn(2+)</name>
        <dbReference type="ChEBI" id="CHEBI:29105"/>
    </ligand>
</feature>
<feature type="binding site" evidence="1">
    <location>
        <begin position="120"/>
        <end position="127"/>
    </location>
    <ligand>
        <name>ATP</name>
        <dbReference type="ChEBI" id="CHEBI:30616"/>
    </ligand>
</feature>
<proteinExistence type="inferred from homology"/>